<proteinExistence type="inferred from homology"/>
<organism>
    <name type="scientific">Shigella flexneri</name>
    <dbReference type="NCBI Taxonomy" id="623"/>
    <lineage>
        <taxon>Bacteria</taxon>
        <taxon>Pseudomonadati</taxon>
        <taxon>Pseudomonadota</taxon>
        <taxon>Gammaproteobacteria</taxon>
        <taxon>Enterobacterales</taxon>
        <taxon>Enterobacteriaceae</taxon>
        <taxon>Shigella</taxon>
    </lineage>
</organism>
<accession>P64466</accession>
<accession>P76153</accession>
<feature type="chain" id="PRO_0000168966" description="Putative selenoprotein YdfZ">
    <location>
        <begin position="1"/>
        <end position="67"/>
    </location>
</feature>
<feature type="modified residue" description="S-selanylcysteine" evidence="1">
    <location>
        <position position="52"/>
    </location>
</feature>
<sequence>MTTYDRNRNAITTGSRVMVSGTGHTGKILSIDTEGLTAEQIRRGKTVVVEGCEEKLAPLDLIRLGMN</sequence>
<evidence type="ECO:0000255" key="1"/>
<keyword id="KW-1185">Reference proteome</keyword>
<keyword id="KW-0711">Selenium</keyword>
<gene>
    <name type="primary">ydfZ</name>
    <name type="ordered locus">SF1554</name>
    <name type="ordered locus">S1679</name>
</gene>
<dbReference type="EMBL" id="AE005674">
    <property type="protein sequence ID" value="AAN43143.1"/>
    <property type="molecule type" value="Genomic_DNA"/>
</dbReference>
<dbReference type="EMBL" id="AE014073">
    <property type="protein sequence ID" value="AAP17035.1"/>
    <property type="molecule type" value="Genomic_DNA"/>
</dbReference>
<dbReference type="RefSeq" id="NP_707436.1">
    <property type="nucleotide sequence ID" value="NC_004337.2"/>
</dbReference>
<dbReference type="RefSeq" id="WP_000214712.1">
    <property type="nucleotide sequence ID" value="NZ_WPGW01000152.1"/>
</dbReference>
<dbReference type="STRING" id="198214.SF1554"/>
<dbReference type="PaxDb" id="198214-SF1554"/>
<dbReference type="GeneID" id="1024779"/>
<dbReference type="GeneID" id="93775705"/>
<dbReference type="KEGG" id="sfl:SF1554"/>
<dbReference type="KEGG" id="sfx:S1679"/>
<dbReference type="PATRIC" id="fig|198214.7.peg.1836"/>
<dbReference type="HOGENOM" id="CLU_189992_0_0_6"/>
<dbReference type="Proteomes" id="UP000001006">
    <property type="component" value="Chromosome"/>
</dbReference>
<dbReference type="Proteomes" id="UP000002673">
    <property type="component" value="Chromosome"/>
</dbReference>
<dbReference type="InterPro" id="IPR017704">
    <property type="entry name" value="Se-bd_putative_YdfZ"/>
</dbReference>
<dbReference type="NCBIfam" id="TIGR03318">
    <property type="entry name" value="YdfZ_fam"/>
    <property type="match status" value="1"/>
</dbReference>
<dbReference type="Pfam" id="PF14001">
    <property type="entry name" value="YdfZ"/>
    <property type="match status" value="1"/>
</dbReference>
<reference key="1">
    <citation type="journal article" date="2002" name="Nucleic Acids Res.">
        <title>Genome sequence of Shigella flexneri 2a: insights into pathogenicity through comparison with genomes of Escherichia coli K12 and O157.</title>
        <authorList>
            <person name="Jin Q."/>
            <person name="Yuan Z."/>
            <person name="Xu J."/>
            <person name="Wang Y."/>
            <person name="Shen Y."/>
            <person name="Lu W."/>
            <person name="Wang J."/>
            <person name="Liu H."/>
            <person name="Yang J."/>
            <person name="Yang F."/>
            <person name="Zhang X."/>
            <person name="Zhang J."/>
            <person name="Yang G."/>
            <person name="Wu H."/>
            <person name="Qu D."/>
            <person name="Dong J."/>
            <person name="Sun L."/>
            <person name="Xue Y."/>
            <person name="Zhao A."/>
            <person name="Gao Y."/>
            <person name="Zhu J."/>
            <person name="Kan B."/>
            <person name="Ding K."/>
            <person name="Chen S."/>
            <person name="Cheng H."/>
            <person name="Yao Z."/>
            <person name="He B."/>
            <person name="Chen R."/>
            <person name="Ma D."/>
            <person name="Qiang B."/>
            <person name="Wen Y."/>
            <person name="Hou Y."/>
            <person name="Yu J."/>
        </authorList>
    </citation>
    <scope>NUCLEOTIDE SEQUENCE [LARGE SCALE GENOMIC DNA]</scope>
    <source>
        <strain>301 / Serotype 2a</strain>
    </source>
</reference>
<reference key="2">
    <citation type="journal article" date="2003" name="Infect. Immun.">
        <title>Complete genome sequence and comparative genomics of Shigella flexneri serotype 2a strain 2457T.</title>
        <authorList>
            <person name="Wei J."/>
            <person name="Goldberg M.B."/>
            <person name="Burland V."/>
            <person name="Venkatesan M.M."/>
            <person name="Deng W."/>
            <person name="Fournier G."/>
            <person name="Mayhew G.F."/>
            <person name="Plunkett G. III"/>
            <person name="Rose D.J."/>
            <person name="Darling A."/>
            <person name="Mau B."/>
            <person name="Perna N.T."/>
            <person name="Payne S.M."/>
            <person name="Runyen-Janecky L.J."/>
            <person name="Zhou S."/>
            <person name="Schwartz D.C."/>
            <person name="Blattner F.R."/>
        </authorList>
    </citation>
    <scope>NUCLEOTIDE SEQUENCE [LARGE SCALE GENOMIC DNA]</scope>
    <source>
        <strain>ATCC 700930 / 2457T / Serotype 2a</strain>
    </source>
</reference>
<name>YDFZ_SHIFL</name>
<protein>
    <recommendedName>
        <fullName>Putative selenoprotein YdfZ</fullName>
    </recommendedName>
</protein>